<proteinExistence type="inferred from homology"/>
<reference key="1">
    <citation type="journal article" date="2008" name="PLoS ONE">
        <title>Genome biology of Actinobacillus pleuropneumoniae JL03, an isolate of serotype 3 prevalent in China.</title>
        <authorList>
            <person name="Xu Z."/>
            <person name="Zhou Y."/>
            <person name="Li L."/>
            <person name="Zhou R."/>
            <person name="Xiao S."/>
            <person name="Wan Y."/>
            <person name="Zhang S."/>
            <person name="Wang K."/>
            <person name="Li W."/>
            <person name="Li L."/>
            <person name="Jin H."/>
            <person name="Kang M."/>
            <person name="Dalai B."/>
            <person name="Li T."/>
            <person name="Liu L."/>
            <person name="Cheng Y."/>
            <person name="Zhang L."/>
            <person name="Xu T."/>
            <person name="Zheng H."/>
            <person name="Pu S."/>
            <person name="Wang B."/>
            <person name="Gu W."/>
            <person name="Zhang X.L."/>
            <person name="Zhu G.-F."/>
            <person name="Wang S."/>
            <person name="Zhao G.-P."/>
            <person name="Chen H."/>
        </authorList>
    </citation>
    <scope>NUCLEOTIDE SEQUENCE [LARGE SCALE GENOMIC DNA]</scope>
    <source>
        <strain>JL03</strain>
    </source>
</reference>
<protein>
    <recommendedName>
        <fullName evidence="1">Ribosomal RNA large subunit methyltransferase E</fullName>
        <ecNumber evidence="1">2.1.1.166</ecNumber>
    </recommendedName>
    <alternativeName>
        <fullName evidence="1">23S rRNA Um2552 methyltransferase</fullName>
    </alternativeName>
    <alternativeName>
        <fullName evidence="1">rRNA (uridine-2'-O-)-methyltransferase</fullName>
    </alternativeName>
</protein>
<feature type="chain" id="PRO_1000194972" description="Ribosomal RNA large subunit methyltransferase E">
    <location>
        <begin position="1"/>
        <end position="208"/>
    </location>
</feature>
<feature type="active site" description="Proton acceptor" evidence="1">
    <location>
        <position position="163"/>
    </location>
</feature>
<feature type="binding site" evidence="1">
    <location>
        <position position="62"/>
    </location>
    <ligand>
        <name>S-adenosyl-L-methionine</name>
        <dbReference type="ChEBI" id="CHEBI:59789"/>
    </ligand>
</feature>
<feature type="binding site" evidence="1">
    <location>
        <position position="64"/>
    </location>
    <ligand>
        <name>S-adenosyl-L-methionine</name>
        <dbReference type="ChEBI" id="CHEBI:59789"/>
    </ligand>
</feature>
<feature type="binding site" evidence="1">
    <location>
        <position position="82"/>
    </location>
    <ligand>
        <name>S-adenosyl-L-methionine</name>
        <dbReference type="ChEBI" id="CHEBI:59789"/>
    </ligand>
</feature>
<feature type="binding site" evidence="1">
    <location>
        <position position="98"/>
    </location>
    <ligand>
        <name>S-adenosyl-L-methionine</name>
        <dbReference type="ChEBI" id="CHEBI:59789"/>
    </ligand>
</feature>
<feature type="binding site" evidence="1">
    <location>
        <position position="123"/>
    </location>
    <ligand>
        <name>S-adenosyl-L-methionine</name>
        <dbReference type="ChEBI" id="CHEBI:59789"/>
    </ligand>
</feature>
<name>RLME_ACTPJ</name>
<evidence type="ECO:0000255" key="1">
    <source>
        <dbReference type="HAMAP-Rule" id="MF_01547"/>
    </source>
</evidence>
<organism>
    <name type="scientific">Actinobacillus pleuropneumoniae serotype 3 (strain JL03)</name>
    <dbReference type="NCBI Taxonomy" id="434271"/>
    <lineage>
        <taxon>Bacteria</taxon>
        <taxon>Pseudomonadati</taxon>
        <taxon>Pseudomonadota</taxon>
        <taxon>Gammaproteobacteria</taxon>
        <taxon>Pasteurellales</taxon>
        <taxon>Pasteurellaceae</taxon>
        <taxon>Actinobacillus</taxon>
    </lineage>
</organism>
<keyword id="KW-0963">Cytoplasm</keyword>
<keyword id="KW-0489">Methyltransferase</keyword>
<keyword id="KW-0698">rRNA processing</keyword>
<keyword id="KW-0949">S-adenosyl-L-methionine</keyword>
<keyword id="KW-0808">Transferase</keyword>
<dbReference type="EC" id="2.1.1.166" evidence="1"/>
<dbReference type="EMBL" id="CP000687">
    <property type="protein sequence ID" value="ABY69158.1"/>
    <property type="molecule type" value="Genomic_DNA"/>
</dbReference>
<dbReference type="RefSeq" id="WP_005596838.1">
    <property type="nucleotide sequence ID" value="NC_010278.1"/>
</dbReference>
<dbReference type="SMR" id="B0BUF3"/>
<dbReference type="GeneID" id="48598783"/>
<dbReference type="KEGG" id="apj:APJL_0588"/>
<dbReference type="HOGENOM" id="CLU_009422_4_0_6"/>
<dbReference type="Proteomes" id="UP000008547">
    <property type="component" value="Chromosome"/>
</dbReference>
<dbReference type="GO" id="GO:0005737">
    <property type="term" value="C:cytoplasm"/>
    <property type="evidence" value="ECO:0007669"/>
    <property type="project" value="UniProtKB-SubCell"/>
</dbReference>
<dbReference type="GO" id="GO:0008650">
    <property type="term" value="F:rRNA (uridine-2'-O-)-methyltransferase activity"/>
    <property type="evidence" value="ECO:0007669"/>
    <property type="project" value="UniProtKB-UniRule"/>
</dbReference>
<dbReference type="FunFam" id="3.40.50.150:FF:000005">
    <property type="entry name" value="Ribosomal RNA large subunit methyltransferase E"/>
    <property type="match status" value="1"/>
</dbReference>
<dbReference type="Gene3D" id="3.40.50.150">
    <property type="entry name" value="Vaccinia Virus protein VP39"/>
    <property type="match status" value="1"/>
</dbReference>
<dbReference type="HAMAP" id="MF_01547">
    <property type="entry name" value="RNA_methyltr_E"/>
    <property type="match status" value="1"/>
</dbReference>
<dbReference type="InterPro" id="IPR050082">
    <property type="entry name" value="RNA_methyltr_RlmE"/>
</dbReference>
<dbReference type="InterPro" id="IPR002877">
    <property type="entry name" value="RNA_MeTrfase_FtsJ_dom"/>
</dbReference>
<dbReference type="InterPro" id="IPR015507">
    <property type="entry name" value="rRNA-MeTfrase_E"/>
</dbReference>
<dbReference type="InterPro" id="IPR004512">
    <property type="entry name" value="rRNA_MeTrfase_gammaproteobac"/>
</dbReference>
<dbReference type="InterPro" id="IPR029063">
    <property type="entry name" value="SAM-dependent_MTases_sf"/>
</dbReference>
<dbReference type="NCBIfam" id="NF008390">
    <property type="entry name" value="PRK11188.1"/>
    <property type="match status" value="1"/>
</dbReference>
<dbReference type="NCBIfam" id="TIGR00438">
    <property type="entry name" value="rrmJ"/>
    <property type="match status" value="1"/>
</dbReference>
<dbReference type="PANTHER" id="PTHR10920">
    <property type="entry name" value="RIBOSOMAL RNA METHYLTRANSFERASE"/>
    <property type="match status" value="1"/>
</dbReference>
<dbReference type="PANTHER" id="PTHR10920:SF18">
    <property type="entry name" value="RRNA METHYLTRANSFERASE 2, MITOCHONDRIAL"/>
    <property type="match status" value="1"/>
</dbReference>
<dbReference type="Pfam" id="PF01728">
    <property type="entry name" value="FtsJ"/>
    <property type="match status" value="1"/>
</dbReference>
<dbReference type="PIRSF" id="PIRSF005461">
    <property type="entry name" value="23S_rRNA_mtase"/>
    <property type="match status" value="1"/>
</dbReference>
<dbReference type="SUPFAM" id="SSF53335">
    <property type="entry name" value="S-adenosyl-L-methionine-dependent methyltransferases"/>
    <property type="match status" value="1"/>
</dbReference>
<comment type="function">
    <text evidence="1">Specifically methylates the uridine in position 2552 of 23S rRNA at the 2'-O position of the ribose in the fully assembled 50S ribosomal subunit.</text>
</comment>
<comment type="catalytic activity">
    <reaction evidence="1">
        <text>uridine(2552) in 23S rRNA + S-adenosyl-L-methionine = 2'-O-methyluridine(2552) in 23S rRNA + S-adenosyl-L-homocysteine + H(+)</text>
        <dbReference type="Rhea" id="RHEA:42720"/>
        <dbReference type="Rhea" id="RHEA-COMP:10202"/>
        <dbReference type="Rhea" id="RHEA-COMP:10203"/>
        <dbReference type="ChEBI" id="CHEBI:15378"/>
        <dbReference type="ChEBI" id="CHEBI:57856"/>
        <dbReference type="ChEBI" id="CHEBI:59789"/>
        <dbReference type="ChEBI" id="CHEBI:65315"/>
        <dbReference type="ChEBI" id="CHEBI:74478"/>
        <dbReference type="EC" id="2.1.1.166"/>
    </reaction>
</comment>
<comment type="subcellular location">
    <subcellularLocation>
        <location evidence="1">Cytoplasm</location>
    </subcellularLocation>
</comment>
<comment type="similarity">
    <text evidence="1">Belongs to the class I-like SAM-binding methyltransferase superfamily. RNA methyltransferase RlmE family.</text>
</comment>
<gene>
    <name evidence="1" type="primary">rlmE</name>
    <name evidence="1" type="synonym">ftsJ</name>
    <name evidence="1" type="synonym">rrmJ</name>
    <name type="ordered locus">APJL_0588</name>
</gene>
<sequence>MGRKRSASSSRWLAEHFKDQFVQKAHKQKLRSRAYFKLDEIQQTDRLFKPGMTVVDLGAAPGGWSQYAVTQIGSKGRIIACDILDMNPIVGVDFLQGDFREESVLNALLERVGDDMVDVVMSDMAPNFSGMPSVDIPRAMYLVELALDMCRQVLAPKGSFVVKVFQGEGFDDYLRDIRAMFTTVKVRKPEASRDRSREVYIVATGYKG</sequence>
<accession>B0BUF3</accession>